<proteinExistence type="inferred from homology"/>
<accession>Q71XW2</accession>
<protein>
    <recommendedName>
        <fullName evidence="1">Phosphopantetheine adenylyltransferase</fullName>
        <ecNumber evidence="1">2.7.7.3</ecNumber>
    </recommendedName>
    <alternativeName>
        <fullName evidence="1">Dephospho-CoA pyrophosphorylase</fullName>
    </alternativeName>
    <alternativeName>
        <fullName evidence="1">Pantetheine-phosphate adenylyltransferase</fullName>
        <shortName evidence="1">PPAT</shortName>
    </alternativeName>
</protein>
<sequence>MGDKIAVIPGTFDPITNGHLDIIERAAKIFDVLYVSVLNNSSKKPLFTIEERMEMIRQVTAHLPNVQVESASGLTVDYAATRGATAIVRGLRAVSDFEYEMQIASMNRTLNAEIETFFIMTNTKYSFLSSSMVKEVAQYQGDISELVPEIVNEQVQAKFK</sequence>
<organism>
    <name type="scientific">Listeria monocytogenes serotype 4b (strain F2365)</name>
    <dbReference type="NCBI Taxonomy" id="265669"/>
    <lineage>
        <taxon>Bacteria</taxon>
        <taxon>Bacillati</taxon>
        <taxon>Bacillota</taxon>
        <taxon>Bacilli</taxon>
        <taxon>Bacillales</taxon>
        <taxon>Listeriaceae</taxon>
        <taxon>Listeria</taxon>
    </lineage>
</organism>
<reference key="1">
    <citation type="journal article" date="2004" name="Nucleic Acids Res.">
        <title>Whole genome comparisons of serotype 4b and 1/2a strains of the food-borne pathogen Listeria monocytogenes reveal new insights into the core genome components of this species.</title>
        <authorList>
            <person name="Nelson K.E."/>
            <person name="Fouts D.E."/>
            <person name="Mongodin E.F."/>
            <person name="Ravel J."/>
            <person name="DeBoy R.T."/>
            <person name="Kolonay J.F."/>
            <person name="Rasko D.A."/>
            <person name="Angiuoli S.V."/>
            <person name="Gill S.R."/>
            <person name="Paulsen I.T."/>
            <person name="Peterson J.D."/>
            <person name="White O."/>
            <person name="Nelson W.C."/>
            <person name="Nierman W.C."/>
            <person name="Beanan M.J."/>
            <person name="Brinkac L.M."/>
            <person name="Daugherty S.C."/>
            <person name="Dodson R.J."/>
            <person name="Durkin A.S."/>
            <person name="Madupu R."/>
            <person name="Haft D.H."/>
            <person name="Selengut J."/>
            <person name="Van Aken S.E."/>
            <person name="Khouri H.M."/>
            <person name="Fedorova N."/>
            <person name="Forberger H.A."/>
            <person name="Tran B."/>
            <person name="Kathariou S."/>
            <person name="Wonderling L.D."/>
            <person name="Uhlich G.A."/>
            <person name="Bayles D.O."/>
            <person name="Luchansky J.B."/>
            <person name="Fraser C.M."/>
        </authorList>
    </citation>
    <scope>NUCLEOTIDE SEQUENCE [LARGE SCALE GENOMIC DNA]</scope>
    <source>
        <strain>F2365</strain>
    </source>
</reference>
<comment type="function">
    <text evidence="1">Reversibly transfers an adenylyl group from ATP to 4'-phosphopantetheine, yielding dephospho-CoA (dPCoA) and pyrophosphate.</text>
</comment>
<comment type="catalytic activity">
    <reaction evidence="1">
        <text>(R)-4'-phosphopantetheine + ATP + H(+) = 3'-dephospho-CoA + diphosphate</text>
        <dbReference type="Rhea" id="RHEA:19801"/>
        <dbReference type="ChEBI" id="CHEBI:15378"/>
        <dbReference type="ChEBI" id="CHEBI:30616"/>
        <dbReference type="ChEBI" id="CHEBI:33019"/>
        <dbReference type="ChEBI" id="CHEBI:57328"/>
        <dbReference type="ChEBI" id="CHEBI:61723"/>
        <dbReference type="EC" id="2.7.7.3"/>
    </reaction>
</comment>
<comment type="cofactor">
    <cofactor evidence="1">
        <name>Mg(2+)</name>
        <dbReference type="ChEBI" id="CHEBI:18420"/>
    </cofactor>
</comment>
<comment type="pathway">
    <text evidence="1">Cofactor biosynthesis; coenzyme A biosynthesis; CoA from (R)-pantothenate: step 4/5.</text>
</comment>
<comment type="subunit">
    <text evidence="1">Homohexamer.</text>
</comment>
<comment type="subcellular location">
    <subcellularLocation>
        <location evidence="1">Cytoplasm</location>
    </subcellularLocation>
</comment>
<comment type="similarity">
    <text evidence="1">Belongs to the bacterial CoaD family.</text>
</comment>
<feature type="chain" id="PRO_0000156231" description="Phosphopantetheine adenylyltransferase">
    <location>
        <begin position="1"/>
        <end position="160"/>
    </location>
</feature>
<feature type="binding site" evidence="1">
    <location>
        <begin position="11"/>
        <end position="12"/>
    </location>
    <ligand>
        <name>ATP</name>
        <dbReference type="ChEBI" id="CHEBI:30616"/>
    </ligand>
</feature>
<feature type="binding site" evidence="1">
    <location>
        <position position="11"/>
    </location>
    <ligand>
        <name>substrate</name>
    </ligand>
</feature>
<feature type="binding site" evidence="1">
    <location>
        <position position="19"/>
    </location>
    <ligand>
        <name>ATP</name>
        <dbReference type="ChEBI" id="CHEBI:30616"/>
    </ligand>
</feature>
<feature type="binding site" evidence="1">
    <location>
        <position position="43"/>
    </location>
    <ligand>
        <name>substrate</name>
    </ligand>
</feature>
<feature type="binding site" evidence="1">
    <location>
        <position position="75"/>
    </location>
    <ligand>
        <name>substrate</name>
    </ligand>
</feature>
<feature type="binding site" evidence="1">
    <location>
        <position position="89"/>
    </location>
    <ligand>
        <name>substrate</name>
    </ligand>
</feature>
<feature type="binding site" evidence="1">
    <location>
        <begin position="90"/>
        <end position="92"/>
    </location>
    <ligand>
        <name>ATP</name>
        <dbReference type="ChEBI" id="CHEBI:30616"/>
    </ligand>
</feature>
<feature type="binding site" evidence="1">
    <location>
        <position position="100"/>
    </location>
    <ligand>
        <name>ATP</name>
        <dbReference type="ChEBI" id="CHEBI:30616"/>
    </ligand>
</feature>
<feature type="binding site" evidence="1">
    <location>
        <begin position="125"/>
        <end position="131"/>
    </location>
    <ligand>
        <name>ATP</name>
        <dbReference type="ChEBI" id="CHEBI:30616"/>
    </ligand>
</feature>
<feature type="site" description="Transition state stabilizer" evidence="1">
    <location>
        <position position="19"/>
    </location>
</feature>
<evidence type="ECO:0000255" key="1">
    <source>
        <dbReference type="HAMAP-Rule" id="MF_00151"/>
    </source>
</evidence>
<keyword id="KW-0067">ATP-binding</keyword>
<keyword id="KW-0173">Coenzyme A biosynthesis</keyword>
<keyword id="KW-0963">Cytoplasm</keyword>
<keyword id="KW-0460">Magnesium</keyword>
<keyword id="KW-0547">Nucleotide-binding</keyword>
<keyword id="KW-0548">Nucleotidyltransferase</keyword>
<keyword id="KW-0808">Transferase</keyword>
<name>COAD_LISMF</name>
<dbReference type="EC" id="2.7.7.3" evidence="1"/>
<dbReference type="EMBL" id="AE017262">
    <property type="protein sequence ID" value="AAT04853.1"/>
    <property type="molecule type" value="Genomic_DNA"/>
</dbReference>
<dbReference type="RefSeq" id="WP_003728323.1">
    <property type="nucleotide sequence ID" value="NC_002973.6"/>
</dbReference>
<dbReference type="SMR" id="Q71XW2"/>
<dbReference type="KEGG" id="lmf:LMOf2365_2083"/>
<dbReference type="HOGENOM" id="CLU_100149_0_1_9"/>
<dbReference type="UniPathway" id="UPA00241">
    <property type="reaction ID" value="UER00355"/>
</dbReference>
<dbReference type="GO" id="GO:0005737">
    <property type="term" value="C:cytoplasm"/>
    <property type="evidence" value="ECO:0007669"/>
    <property type="project" value="UniProtKB-SubCell"/>
</dbReference>
<dbReference type="GO" id="GO:0005524">
    <property type="term" value="F:ATP binding"/>
    <property type="evidence" value="ECO:0007669"/>
    <property type="project" value="UniProtKB-KW"/>
</dbReference>
<dbReference type="GO" id="GO:0004595">
    <property type="term" value="F:pantetheine-phosphate adenylyltransferase activity"/>
    <property type="evidence" value="ECO:0007669"/>
    <property type="project" value="UniProtKB-UniRule"/>
</dbReference>
<dbReference type="GO" id="GO:0015937">
    <property type="term" value="P:coenzyme A biosynthetic process"/>
    <property type="evidence" value="ECO:0007669"/>
    <property type="project" value="UniProtKB-UniRule"/>
</dbReference>
<dbReference type="CDD" id="cd02163">
    <property type="entry name" value="PPAT"/>
    <property type="match status" value="1"/>
</dbReference>
<dbReference type="FunFam" id="3.40.50.620:FF:000012">
    <property type="entry name" value="Phosphopantetheine adenylyltransferase"/>
    <property type="match status" value="1"/>
</dbReference>
<dbReference type="Gene3D" id="3.40.50.620">
    <property type="entry name" value="HUPs"/>
    <property type="match status" value="1"/>
</dbReference>
<dbReference type="HAMAP" id="MF_00151">
    <property type="entry name" value="PPAT_bact"/>
    <property type="match status" value="1"/>
</dbReference>
<dbReference type="InterPro" id="IPR004821">
    <property type="entry name" value="Cyt_trans-like"/>
</dbReference>
<dbReference type="InterPro" id="IPR001980">
    <property type="entry name" value="PPAT"/>
</dbReference>
<dbReference type="InterPro" id="IPR014729">
    <property type="entry name" value="Rossmann-like_a/b/a_fold"/>
</dbReference>
<dbReference type="NCBIfam" id="TIGR01510">
    <property type="entry name" value="coaD_prev_kdtB"/>
    <property type="match status" value="1"/>
</dbReference>
<dbReference type="NCBIfam" id="TIGR00125">
    <property type="entry name" value="cyt_tran_rel"/>
    <property type="match status" value="1"/>
</dbReference>
<dbReference type="PANTHER" id="PTHR21342">
    <property type="entry name" value="PHOSPHOPANTETHEINE ADENYLYLTRANSFERASE"/>
    <property type="match status" value="1"/>
</dbReference>
<dbReference type="PANTHER" id="PTHR21342:SF1">
    <property type="entry name" value="PHOSPHOPANTETHEINE ADENYLYLTRANSFERASE"/>
    <property type="match status" value="1"/>
</dbReference>
<dbReference type="Pfam" id="PF01467">
    <property type="entry name" value="CTP_transf_like"/>
    <property type="match status" value="1"/>
</dbReference>
<dbReference type="PRINTS" id="PR01020">
    <property type="entry name" value="LPSBIOSNTHSS"/>
</dbReference>
<dbReference type="SUPFAM" id="SSF52374">
    <property type="entry name" value="Nucleotidylyl transferase"/>
    <property type="match status" value="1"/>
</dbReference>
<gene>
    <name evidence="1" type="primary">coaD</name>
    <name type="ordered locus">LMOf2365_2083</name>
</gene>